<feature type="chain" id="PRO_0000322304" description="Small ribosomal subunit protein uS4">
    <location>
        <begin position="1"/>
        <end position="206"/>
    </location>
</feature>
<feature type="domain" description="S4 RNA-binding" evidence="1">
    <location>
        <begin position="96"/>
        <end position="156"/>
    </location>
</feature>
<gene>
    <name evidence="1" type="primary">rpsD</name>
    <name type="ordered locus">CGSHiGG_07505</name>
</gene>
<accession>A5UHV4</accession>
<reference key="1">
    <citation type="journal article" date="2007" name="Genome Biol.">
        <title>Characterization and modeling of the Haemophilus influenzae core and supragenomes based on the complete genomic sequences of Rd and 12 clinical nontypeable strains.</title>
        <authorList>
            <person name="Hogg J.S."/>
            <person name="Hu F.Z."/>
            <person name="Janto B."/>
            <person name="Boissy R."/>
            <person name="Hayes J."/>
            <person name="Keefe R."/>
            <person name="Post J.C."/>
            <person name="Ehrlich G.D."/>
        </authorList>
    </citation>
    <scope>NUCLEOTIDE SEQUENCE [LARGE SCALE GENOMIC DNA]</scope>
    <source>
        <strain>PittGG</strain>
    </source>
</reference>
<comment type="function">
    <text evidence="1">One of the primary rRNA binding proteins, it binds directly to 16S rRNA where it nucleates assembly of the body of the 30S subunit.</text>
</comment>
<comment type="function">
    <text evidence="1">With S5 and S12 plays an important role in translational accuracy.</text>
</comment>
<comment type="subunit">
    <text evidence="1">Part of the 30S ribosomal subunit. Contacts protein S5. The interaction surface between S4 and S5 is involved in control of translational fidelity.</text>
</comment>
<comment type="similarity">
    <text evidence="1">Belongs to the universal ribosomal protein uS4 family.</text>
</comment>
<protein>
    <recommendedName>
        <fullName evidence="1">Small ribosomal subunit protein uS4</fullName>
    </recommendedName>
    <alternativeName>
        <fullName evidence="2">30S ribosomal protein S4</fullName>
    </alternativeName>
</protein>
<sequence>MARYLGPKLKLSRREGTDLFLKSGVRAIDSKCKIDTAPGQHGARKPRLSDYGSQLREKQKVRRIYGILERQFRNYYKEANRLKGNTGENLLVLLEGRLDNVVYRMGFAATRAEARQLVSHKAIVVNGRVVNIPSFQVSVNDVVAIREKSKKQARIKASLELAEQREKPTWLEVDSAKMEGVFKRVPERSDLSADINEHLIVELYSK</sequence>
<name>RS4_HAEIG</name>
<evidence type="ECO:0000255" key="1">
    <source>
        <dbReference type="HAMAP-Rule" id="MF_01306"/>
    </source>
</evidence>
<evidence type="ECO:0000305" key="2"/>
<organism>
    <name type="scientific">Haemophilus influenzae (strain PittGG)</name>
    <dbReference type="NCBI Taxonomy" id="374931"/>
    <lineage>
        <taxon>Bacteria</taxon>
        <taxon>Pseudomonadati</taxon>
        <taxon>Pseudomonadota</taxon>
        <taxon>Gammaproteobacteria</taxon>
        <taxon>Pasteurellales</taxon>
        <taxon>Pasteurellaceae</taxon>
        <taxon>Haemophilus</taxon>
    </lineage>
</organism>
<proteinExistence type="inferred from homology"/>
<keyword id="KW-0687">Ribonucleoprotein</keyword>
<keyword id="KW-0689">Ribosomal protein</keyword>
<keyword id="KW-0694">RNA-binding</keyword>
<keyword id="KW-0699">rRNA-binding</keyword>
<dbReference type="EMBL" id="CP000672">
    <property type="protein sequence ID" value="ABR00360.1"/>
    <property type="molecule type" value="Genomic_DNA"/>
</dbReference>
<dbReference type="SMR" id="A5UHV4"/>
<dbReference type="KEGG" id="hiq:CGSHiGG_07505"/>
<dbReference type="HOGENOM" id="CLU_092403_0_2_6"/>
<dbReference type="Proteomes" id="UP000001990">
    <property type="component" value="Chromosome"/>
</dbReference>
<dbReference type="GO" id="GO:0015935">
    <property type="term" value="C:small ribosomal subunit"/>
    <property type="evidence" value="ECO:0007669"/>
    <property type="project" value="InterPro"/>
</dbReference>
<dbReference type="GO" id="GO:0019843">
    <property type="term" value="F:rRNA binding"/>
    <property type="evidence" value="ECO:0007669"/>
    <property type="project" value="UniProtKB-UniRule"/>
</dbReference>
<dbReference type="GO" id="GO:0003735">
    <property type="term" value="F:structural constituent of ribosome"/>
    <property type="evidence" value="ECO:0007669"/>
    <property type="project" value="InterPro"/>
</dbReference>
<dbReference type="GO" id="GO:0042274">
    <property type="term" value="P:ribosomal small subunit biogenesis"/>
    <property type="evidence" value="ECO:0007669"/>
    <property type="project" value="TreeGrafter"/>
</dbReference>
<dbReference type="GO" id="GO:0006412">
    <property type="term" value="P:translation"/>
    <property type="evidence" value="ECO:0007669"/>
    <property type="project" value="UniProtKB-UniRule"/>
</dbReference>
<dbReference type="CDD" id="cd00165">
    <property type="entry name" value="S4"/>
    <property type="match status" value="1"/>
</dbReference>
<dbReference type="FunFam" id="1.10.1050.10:FF:000001">
    <property type="entry name" value="30S ribosomal protein S4"/>
    <property type="match status" value="1"/>
</dbReference>
<dbReference type="FunFam" id="3.10.290.10:FF:000001">
    <property type="entry name" value="30S ribosomal protein S4"/>
    <property type="match status" value="1"/>
</dbReference>
<dbReference type="Gene3D" id="1.10.1050.10">
    <property type="entry name" value="Ribosomal Protein S4 Delta 41, Chain A, domain 1"/>
    <property type="match status" value="1"/>
</dbReference>
<dbReference type="Gene3D" id="3.10.290.10">
    <property type="entry name" value="RNA-binding S4 domain"/>
    <property type="match status" value="1"/>
</dbReference>
<dbReference type="HAMAP" id="MF_01306_B">
    <property type="entry name" value="Ribosomal_uS4_B"/>
    <property type="match status" value="1"/>
</dbReference>
<dbReference type="InterPro" id="IPR022801">
    <property type="entry name" value="Ribosomal_uS4"/>
</dbReference>
<dbReference type="InterPro" id="IPR005709">
    <property type="entry name" value="Ribosomal_uS4_bac-type"/>
</dbReference>
<dbReference type="InterPro" id="IPR018079">
    <property type="entry name" value="Ribosomal_uS4_CS"/>
</dbReference>
<dbReference type="InterPro" id="IPR001912">
    <property type="entry name" value="Ribosomal_uS4_N"/>
</dbReference>
<dbReference type="InterPro" id="IPR002942">
    <property type="entry name" value="S4_RNA-bd"/>
</dbReference>
<dbReference type="InterPro" id="IPR036986">
    <property type="entry name" value="S4_RNA-bd_sf"/>
</dbReference>
<dbReference type="NCBIfam" id="NF003717">
    <property type="entry name" value="PRK05327.1"/>
    <property type="match status" value="1"/>
</dbReference>
<dbReference type="NCBIfam" id="TIGR01017">
    <property type="entry name" value="rpsD_bact"/>
    <property type="match status" value="1"/>
</dbReference>
<dbReference type="PANTHER" id="PTHR11831">
    <property type="entry name" value="30S 40S RIBOSOMAL PROTEIN"/>
    <property type="match status" value="1"/>
</dbReference>
<dbReference type="PANTHER" id="PTHR11831:SF4">
    <property type="entry name" value="SMALL RIBOSOMAL SUBUNIT PROTEIN US4M"/>
    <property type="match status" value="1"/>
</dbReference>
<dbReference type="Pfam" id="PF00163">
    <property type="entry name" value="Ribosomal_S4"/>
    <property type="match status" value="1"/>
</dbReference>
<dbReference type="Pfam" id="PF01479">
    <property type="entry name" value="S4"/>
    <property type="match status" value="1"/>
</dbReference>
<dbReference type="SMART" id="SM01390">
    <property type="entry name" value="Ribosomal_S4"/>
    <property type="match status" value="1"/>
</dbReference>
<dbReference type="SMART" id="SM00363">
    <property type="entry name" value="S4"/>
    <property type="match status" value="1"/>
</dbReference>
<dbReference type="SUPFAM" id="SSF55174">
    <property type="entry name" value="Alpha-L RNA-binding motif"/>
    <property type="match status" value="1"/>
</dbReference>
<dbReference type="PROSITE" id="PS00632">
    <property type="entry name" value="RIBOSOMAL_S4"/>
    <property type="match status" value="1"/>
</dbReference>
<dbReference type="PROSITE" id="PS50889">
    <property type="entry name" value="S4"/>
    <property type="match status" value="1"/>
</dbReference>